<dbReference type="EC" id="3.4.21.89"/>
<dbReference type="EMBL" id="AE001439">
    <property type="protein sequence ID" value="AAD06104.1"/>
    <property type="molecule type" value="Genomic_DNA"/>
</dbReference>
<dbReference type="PIR" id="D71921">
    <property type="entry name" value="D71921"/>
</dbReference>
<dbReference type="RefSeq" id="WP_000670646.1">
    <property type="nucleotide sequence ID" value="NC_000921.1"/>
</dbReference>
<dbReference type="KEGG" id="hpj:jhp_0523"/>
<dbReference type="PATRIC" id="fig|85963.30.peg.471"/>
<dbReference type="eggNOG" id="COG0681">
    <property type="taxonomic scope" value="Bacteria"/>
</dbReference>
<dbReference type="Proteomes" id="UP000000804">
    <property type="component" value="Chromosome"/>
</dbReference>
<dbReference type="GO" id="GO:0005886">
    <property type="term" value="C:plasma membrane"/>
    <property type="evidence" value="ECO:0007669"/>
    <property type="project" value="UniProtKB-SubCell"/>
</dbReference>
<dbReference type="GO" id="GO:0004252">
    <property type="term" value="F:serine-type endopeptidase activity"/>
    <property type="evidence" value="ECO:0007669"/>
    <property type="project" value="UniProtKB-EC"/>
</dbReference>
<dbReference type="GO" id="GO:0006465">
    <property type="term" value="P:signal peptide processing"/>
    <property type="evidence" value="ECO:0007669"/>
    <property type="project" value="InterPro"/>
</dbReference>
<dbReference type="CDD" id="cd06530">
    <property type="entry name" value="S26_SPase_I"/>
    <property type="match status" value="1"/>
</dbReference>
<dbReference type="Gene3D" id="2.10.109.10">
    <property type="entry name" value="Umud Fragment, subunit A"/>
    <property type="match status" value="1"/>
</dbReference>
<dbReference type="InterPro" id="IPR036286">
    <property type="entry name" value="LexA/Signal_pep-like_sf"/>
</dbReference>
<dbReference type="InterPro" id="IPR000223">
    <property type="entry name" value="Pept_S26A_signal_pept_1"/>
</dbReference>
<dbReference type="InterPro" id="IPR019758">
    <property type="entry name" value="Pept_S26A_signal_pept_1_CS"/>
</dbReference>
<dbReference type="InterPro" id="IPR019533">
    <property type="entry name" value="Peptidase_S26"/>
</dbReference>
<dbReference type="NCBIfam" id="TIGR02227">
    <property type="entry name" value="sigpep_I_bact"/>
    <property type="match status" value="1"/>
</dbReference>
<dbReference type="PANTHER" id="PTHR43390:SF1">
    <property type="entry name" value="CHLOROPLAST PROCESSING PEPTIDASE"/>
    <property type="match status" value="1"/>
</dbReference>
<dbReference type="PANTHER" id="PTHR43390">
    <property type="entry name" value="SIGNAL PEPTIDASE I"/>
    <property type="match status" value="1"/>
</dbReference>
<dbReference type="Pfam" id="PF10502">
    <property type="entry name" value="Peptidase_S26"/>
    <property type="match status" value="1"/>
</dbReference>
<dbReference type="PRINTS" id="PR00727">
    <property type="entry name" value="LEADERPTASE"/>
</dbReference>
<dbReference type="SUPFAM" id="SSF51306">
    <property type="entry name" value="LexA/Signal peptidase"/>
    <property type="match status" value="1"/>
</dbReference>
<dbReference type="PROSITE" id="PS00761">
    <property type="entry name" value="SPASE_I_3"/>
    <property type="match status" value="1"/>
</dbReference>
<comment type="catalytic activity">
    <reaction>
        <text>Cleavage of hydrophobic, N-terminal signal or leader sequences from secreted and periplasmic proteins.</text>
        <dbReference type="EC" id="3.4.21.89"/>
    </reaction>
</comment>
<comment type="subcellular location">
    <subcellularLocation>
        <location evidence="3">Cell membrane</location>
        <topology evidence="3">Single-pass type II membrane protein</topology>
    </subcellularLocation>
</comment>
<comment type="similarity">
    <text evidence="3">Belongs to the peptidase S26 family.</text>
</comment>
<protein>
    <recommendedName>
        <fullName>Signal peptidase I</fullName>
        <shortName>SPase I</shortName>
        <ecNumber>3.4.21.89</ecNumber>
    </recommendedName>
    <alternativeName>
        <fullName>Leader peptidase I</fullName>
    </alternativeName>
</protein>
<gene>
    <name type="primary">lepB</name>
    <name type="ordered locus">jhp_0523</name>
</gene>
<evidence type="ECO:0000250" key="1"/>
<evidence type="ECO:0000255" key="2"/>
<evidence type="ECO:0000305" key="3"/>
<name>LEP_HELPJ</name>
<keyword id="KW-1003">Cell membrane</keyword>
<keyword id="KW-0378">Hydrolase</keyword>
<keyword id="KW-0472">Membrane</keyword>
<keyword id="KW-0645">Protease</keyword>
<keyword id="KW-0812">Transmembrane</keyword>
<keyword id="KW-1133">Transmembrane helix</keyword>
<accession>Q9ZLQ5</accession>
<reference key="1">
    <citation type="journal article" date="1999" name="Nature">
        <title>Genomic sequence comparison of two unrelated isolates of the human gastric pathogen Helicobacter pylori.</title>
        <authorList>
            <person name="Alm R.A."/>
            <person name="Ling L.-S.L."/>
            <person name="Moir D.T."/>
            <person name="King B.L."/>
            <person name="Brown E.D."/>
            <person name="Doig P.C."/>
            <person name="Smith D.R."/>
            <person name="Noonan B."/>
            <person name="Guild B.C."/>
            <person name="deJonge B.L."/>
            <person name="Carmel G."/>
            <person name="Tummino P.J."/>
            <person name="Caruso A."/>
            <person name="Uria-Nickelsen M."/>
            <person name="Mills D.M."/>
            <person name="Ives C."/>
            <person name="Gibson R."/>
            <person name="Merberg D."/>
            <person name="Mills S.D."/>
            <person name="Jiang Q."/>
            <person name="Taylor D.E."/>
            <person name="Vovis G.F."/>
            <person name="Trust T.J."/>
        </authorList>
    </citation>
    <scope>NUCLEOTIDE SEQUENCE [LARGE SCALE GENOMIC DNA]</scope>
    <source>
        <strain>J99 / ATCC 700824</strain>
    </source>
</reference>
<proteinExistence type="inferred from homology"/>
<sequence length="290" mass="33726">MKFLRSVYAFCSSWVGTIIIVLLVIFFIAQAFIIPSRSMVGTLYEGDMLFVKKFSYGIPIPKIPWIELPVMPDFKNNGHLIEGDRPKRGEVVVFIPPHEKKSYYVKRNFAIGGDEVLFTNEGFYLHPFESGNDKDYISKHYPNALTKEFMGKIFVLNPYKSKHPGIHYQKDNETFHLMEQLATQGAEANISMQLIQMEGEKVFYKKINHDEFFMIGDNRDNSSDSRFWGSVAYKNIVGSPWFVYFSLSLKNSLEVDAENNPKKRYLVRWERMFKSVEGLEKIIKKEKATH</sequence>
<organism>
    <name type="scientific">Helicobacter pylori (strain J99 / ATCC 700824)</name>
    <name type="common">Campylobacter pylori J99</name>
    <dbReference type="NCBI Taxonomy" id="85963"/>
    <lineage>
        <taxon>Bacteria</taxon>
        <taxon>Pseudomonadati</taxon>
        <taxon>Campylobacterota</taxon>
        <taxon>Epsilonproteobacteria</taxon>
        <taxon>Campylobacterales</taxon>
        <taxon>Helicobacteraceae</taxon>
        <taxon>Helicobacter</taxon>
    </lineage>
</organism>
<feature type="chain" id="PRO_0000109509" description="Signal peptidase I">
    <location>
        <begin position="1"/>
        <end position="290"/>
    </location>
</feature>
<feature type="topological domain" description="Cytoplasmic" evidence="2">
    <location>
        <begin position="1"/>
        <end position="13"/>
    </location>
</feature>
<feature type="transmembrane region" description="Helical" evidence="2">
    <location>
        <begin position="14"/>
        <end position="34"/>
    </location>
</feature>
<feature type="topological domain" description="Extracellular" evidence="2">
    <location>
        <begin position="35"/>
        <end position="290"/>
    </location>
</feature>
<feature type="active site" evidence="1">
    <location>
        <position position="38"/>
    </location>
</feature>
<feature type="active site" evidence="1">
    <location>
        <position position="106"/>
    </location>
</feature>